<accession>O29495</accession>
<keyword id="KW-0472">Membrane</keyword>
<keyword id="KW-1185">Reference proteome</keyword>
<keyword id="KW-0812">Transmembrane</keyword>
<keyword id="KW-1133">Transmembrane helix</keyword>
<organism>
    <name type="scientific">Archaeoglobus fulgidus (strain ATCC 49558 / DSM 4304 / JCM 9628 / NBRC 100126 / VC-16)</name>
    <dbReference type="NCBI Taxonomy" id="224325"/>
    <lineage>
        <taxon>Archaea</taxon>
        <taxon>Methanobacteriati</taxon>
        <taxon>Methanobacteriota</taxon>
        <taxon>Archaeoglobi</taxon>
        <taxon>Archaeoglobales</taxon>
        <taxon>Archaeoglobaceae</taxon>
        <taxon>Archaeoglobus</taxon>
    </lineage>
</organism>
<name>Y763_ARCFU</name>
<protein>
    <recommendedName>
        <fullName>Uncharacterized protein AF_0763</fullName>
    </recommendedName>
</protein>
<comment type="subcellular location">
    <subcellularLocation>
        <location evidence="2">Membrane</location>
        <topology evidence="2">Single-pass membrane protein</topology>
    </subcellularLocation>
</comment>
<proteinExistence type="predicted"/>
<dbReference type="EMBL" id="AE000782">
    <property type="protein sequence ID" value="AAB90482.1"/>
    <property type="molecule type" value="Genomic_DNA"/>
</dbReference>
<dbReference type="PIR" id="C69345">
    <property type="entry name" value="C69345"/>
</dbReference>
<dbReference type="RefSeq" id="WP_010878266.1">
    <property type="nucleotide sequence ID" value="NC_000917.1"/>
</dbReference>
<dbReference type="STRING" id="224325.AF_0763"/>
<dbReference type="PaxDb" id="224325-AF_0763"/>
<dbReference type="EnsemblBacteria" id="AAB90482">
    <property type="protein sequence ID" value="AAB90482"/>
    <property type="gene ID" value="AF_0763"/>
</dbReference>
<dbReference type="KEGG" id="afu:AF_0763"/>
<dbReference type="eggNOG" id="arCOG06117">
    <property type="taxonomic scope" value="Archaea"/>
</dbReference>
<dbReference type="HOGENOM" id="CLU_1425021_0_0_2"/>
<dbReference type="Proteomes" id="UP000002199">
    <property type="component" value="Chromosome"/>
</dbReference>
<dbReference type="GO" id="GO:0016020">
    <property type="term" value="C:membrane"/>
    <property type="evidence" value="ECO:0007669"/>
    <property type="project" value="UniProtKB-SubCell"/>
</dbReference>
<dbReference type="InterPro" id="IPR056613">
    <property type="entry name" value="DUF7287"/>
</dbReference>
<dbReference type="Pfam" id="PF23958">
    <property type="entry name" value="DUF7287"/>
    <property type="match status" value="1"/>
</dbReference>
<gene>
    <name type="ordered locus">AF_0763</name>
</gene>
<reference key="1">
    <citation type="journal article" date="1997" name="Nature">
        <title>The complete genome sequence of the hyperthermophilic, sulphate-reducing archaeon Archaeoglobus fulgidus.</title>
        <authorList>
            <person name="Klenk H.-P."/>
            <person name="Clayton R.A."/>
            <person name="Tomb J.-F."/>
            <person name="White O."/>
            <person name="Nelson K.E."/>
            <person name="Ketchum K.A."/>
            <person name="Dodson R.J."/>
            <person name="Gwinn M.L."/>
            <person name="Hickey E.K."/>
            <person name="Peterson J.D."/>
            <person name="Richardson D.L."/>
            <person name="Kerlavage A.R."/>
            <person name="Graham D.E."/>
            <person name="Kyrpides N.C."/>
            <person name="Fleischmann R.D."/>
            <person name="Quackenbush J."/>
            <person name="Lee N.H."/>
            <person name="Sutton G.G."/>
            <person name="Gill S.R."/>
            <person name="Kirkness E.F."/>
            <person name="Dougherty B.A."/>
            <person name="McKenney K."/>
            <person name="Adams M.D."/>
            <person name="Loftus B.J."/>
            <person name="Peterson S.N."/>
            <person name="Reich C.I."/>
            <person name="McNeil L.K."/>
            <person name="Badger J.H."/>
            <person name="Glodek A."/>
            <person name="Zhou L."/>
            <person name="Overbeek R."/>
            <person name="Gocayne J.D."/>
            <person name="Weidman J.F."/>
            <person name="McDonald L.A."/>
            <person name="Utterback T.R."/>
            <person name="Cotton M.D."/>
            <person name="Spriggs T."/>
            <person name="Artiach P."/>
            <person name="Kaine B.P."/>
            <person name="Sykes S.M."/>
            <person name="Sadow P.W."/>
            <person name="D'Andrea K.P."/>
            <person name="Bowman C."/>
            <person name="Fujii C."/>
            <person name="Garland S.A."/>
            <person name="Mason T.M."/>
            <person name="Olsen G.J."/>
            <person name="Fraser C.M."/>
            <person name="Smith H.O."/>
            <person name="Woese C.R."/>
            <person name="Venter J.C."/>
        </authorList>
    </citation>
    <scope>NUCLEOTIDE SEQUENCE [LARGE SCALE GENOMIC DNA]</scope>
    <source>
        <strain>ATCC 49558 / DSM 4304 / JCM 9628 / NBRC 100126 / VC-16</strain>
    </source>
</reference>
<feature type="chain" id="PRO_0000127921" description="Uncharacterized protein AF_0763">
    <location>
        <begin position="1"/>
        <end position="190"/>
    </location>
</feature>
<feature type="transmembrane region" description="Helical" evidence="1">
    <location>
        <begin position="12"/>
        <end position="34"/>
    </location>
</feature>
<evidence type="ECO:0000255" key="1"/>
<evidence type="ECO:0000305" key="2"/>
<sequence length="190" mass="21411">MDNQAKLSLDLLLGLSIFLTTFLFVANFLPGIFADVRHEIALGSHAYRVAALLVEDPGYPDDWCTAVDTSNCISKEFRPGLAIFDENNGTEYNYLNTSKIFKLQELLSNSACRDTVRNYLGLNSTNFKYKFYFSLKYLNDTEIVSGGDNLPEMGNIIKFDRLVYVDNCTAIPCESIAERCVCKLEVAVWI</sequence>